<gene>
    <name evidence="1" type="primary">rsgA</name>
    <name type="ordered locus">BH2503</name>
</gene>
<name>RSGA_HALH5</name>
<feature type="chain" id="PRO_0000171463" description="Small ribosomal subunit biogenesis GTPase RsgA">
    <location>
        <begin position="1"/>
        <end position="294"/>
    </location>
</feature>
<feature type="domain" description="CP-type G" evidence="2">
    <location>
        <begin position="63"/>
        <end position="223"/>
    </location>
</feature>
<feature type="binding site" evidence="1">
    <location>
        <begin position="112"/>
        <end position="115"/>
    </location>
    <ligand>
        <name>GTP</name>
        <dbReference type="ChEBI" id="CHEBI:37565"/>
    </ligand>
</feature>
<feature type="binding site" evidence="1">
    <location>
        <begin position="166"/>
        <end position="174"/>
    </location>
    <ligand>
        <name>GTP</name>
        <dbReference type="ChEBI" id="CHEBI:37565"/>
    </ligand>
</feature>
<feature type="binding site" evidence="1">
    <location>
        <position position="247"/>
    </location>
    <ligand>
        <name>Zn(2+)</name>
        <dbReference type="ChEBI" id="CHEBI:29105"/>
    </ligand>
</feature>
<feature type="binding site" evidence="1">
    <location>
        <position position="252"/>
    </location>
    <ligand>
        <name>Zn(2+)</name>
        <dbReference type="ChEBI" id="CHEBI:29105"/>
    </ligand>
</feature>
<feature type="binding site" evidence="1">
    <location>
        <position position="254"/>
    </location>
    <ligand>
        <name>Zn(2+)</name>
        <dbReference type="ChEBI" id="CHEBI:29105"/>
    </ligand>
</feature>
<feature type="binding site" evidence="1">
    <location>
        <position position="260"/>
    </location>
    <ligand>
        <name>Zn(2+)</name>
        <dbReference type="ChEBI" id="CHEBI:29105"/>
    </ligand>
</feature>
<reference key="1">
    <citation type="journal article" date="2000" name="Nucleic Acids Res.">
        <title>Complete genome sequence of the alkaliphilic bacterium Bacillus halodurans and genomic sequence comparison with Bacillus subtilis.</title>
        <authorList>
            <person name="Takami H."/>
            <person name="Nakasone K."/>
            <person name="Takaki Y."/>
            <person name="Maeno G."/>
            <person name="Sasaki R."/>
            <person name="Masui N."/>
            <person name="Fuji F."/>
            <person name="Hirama C."/>
            <person name="Nakamura Y."/>
            <person name="Ogasawara N."/>
            <person name="Kuhara S."/>
            <person name="Horikoshi K."/>
        </authorList>
    </citation>
    <scope>NUCLEOTIDE SEQUENCE [LARGE SCALE GENOMIC DNA]</scope>
    <source>
        <strain>ATCC BAA-125 / DSM 18197 / FERM 7344 / JCM 9153 / C-125</strain>
    </source>
</reference>
<keyword id="KW-0963">Cytoplasm</keyword>
<keyword id="KW-0342">GTP-binding</keyword>
<keyword id="KW-0378">Hydrolase</keyword>
<keyword id="KW-0479">Metal-binding</keyword>
<keyword id="KW-0547">Nucleotide-binding</keyword>
<keyword id="KW-1185">Reference proteome</keyword>
<keyword id="KW-0690">Ribosome biogenesis</keyword>
<keyword id="KW-0694">RNA-binding</keyword>
<keyword id="KW-0699">rRNA-binding</keyword>
<keyword id="KW-0862">Zinc</keyword>
<organism>
    <name type="scientific">Halalkalibacterium halodurans (strain ATCC BAA-125 / DSM 18197 / FERM 7344 / JCM 9153 / C-125)</name>
    <name type="common">Bacillus halodurans</name>
    <dbReference type="NCBI Taxonomy" id="272558"/>
    <lineage>
        <taxon>Bacteria</taxon>
        <taxon>Bacillati</taxon>
        <taxon>Bacillota</taxon>
        <taxon>Bacilli</taxon>
        <taxon>Bacillales</taxon>
        <taxon>Bacillaceae</taxon>
        <taxon>Halalkalibacterium (ex Joshi et al. 2022)</taxon>
    </lineage>
</organism>
<proteinExistence type="inferred from homology"/>
<sequence length="294" mass="33449">MPKGTIVKALSGFYYVQNEDGLFQCRGRGNFRNRNIKPLVGDEVVFEAENKTDGYVLEIMERKNELLRPPIANVDRAILVFSAAEPTFSPLLLDRFLVHVEANGIEPLIVISKIDLLTEEELETIKQYRNDYEQLGYKVYLTSTIEQLGLDAIRKEFDDHVSVIAGQSGVGKSSLLNAINPALDIETNQISSHLGRGKHTTRHVELIPFGSGLVADTPGFSSLDFIDMEPEELSHYFPEMRDRLPSCKFRGCTHTQEPKCAVKEALAQGEIREFRYEHYVTFLEEVKTQHKRRF</sequence>
<evidence type="ECO:0000255" key="1">
    <source>
        <dbReference type="HAMAP-Rule" id="MF_01820"/>
    </source>
</evidence>
<evidence type="ECO:0000255" key="2">
    <source>
        <dbReference type="PROSITE-ProRule" id="PRU01058"/>
    </source>
</evidence>
<accession>Q9K9Z1</accession>
<comment type="function">
    <text evidence="1">One of several proteins that assist in the late maturation steps of the functional core of the 30S ribosomal subunit. Helps release RbfA from mature subunits. May play a role in the assembly of ribosomal proteins into the subunit. Circularly permuted GTPase that catalyzes slow GTP hydrolysis, GTPase activity is stimulated by the 30S ribosomal subunit.</text>
</comment>
<comment type="cofactor">
    <cofactor evidence="1">
        <name>Zn(2+)</name>
        <dbReference type="ChEBI" id="CHEBI:29105"/>
    </cofactor>
    <text evidence="1">Binds 1 zinc ion per subunit.</text>
</comment>
<comment type="subunit">
    <text evidence="1">Monomer. Associates with 30S ribosomal subunit, binds 16S rRNA.</text>
</comment>
<comment type="subcellular location">
    <subcellularLocation>
        <location evidence="1">Cytoplasm</location>
    </subcellularLocation>
</comment>
<comment type="similarity">
    <text evidence="1">Belongs to the TRAFAC class YlqF/YawG GTPase family. RsgA subfamily.</text>
</comment>
<dbReference type="EC" id="3.6.1.-" evidence="1"/>
<dbReference type="EMBL" id="BA000004">
    <property type="protein sequence ID" value="BAB06222.1"/>
    <property type="molecule type" value="Genomic_DNA"/>
</dbReference>
<dbReference type="PIR" id="G83962">
    <property type="entry name" value="G83962"/>
</dbReference>
<dbReference type="RefSeq" id="WP_010898654.1">
    <property type="nucleotide sequence ID" value="NC_002570.2"/>
</dbReference>
<dbReference type="SMR" id="Q9K9Z1"/>
<dbReference type="STRING" id="272558.gene:10728401"/>
<dbReference type="KEGG" id="bha:BH2503"/>
<dbReference type="eggNOG" id="COG1162">
    <property type="taxonomic scope" value="Bacteria"/>
</dbReference>
<dbReference type="HOGENOM" id="CLU_033617_2_1_9"/>
<dbReference type="OrthoDB" id="9809485at2"/>
<dbReference type="Proteomes" id="UP000001258">
    <property type="component" value="Chromosome"/>
</dbReference>
<dbReference type="GO" id="GO:0005737">
    <property type="term" value="C:cytoplasm"/>
    <property type="evidence" value="ECO:0007669"/>
    <property type="project" value="UniProtKB-SubCell"/>
</dbReference>
<dbReference type="GO" id="GO:0005525">
    <property type="term" value="F:GTP binding"/>
    <property type="evidence" value="ECO:0007669"/>
    <property type="project" value="UniProtKB-UniRule"/>
</dbReference>
<dbReference type="GO" id="GO:0003924">
    <property type="term" value="F:GTPase activity"/>
    <property type="evidence" value="ECO:0007669"/>
    <property type="project" value="UniProtKB-UniRule"/>
</dbReference>
<dbReference type="GO" id="GO:0046872">
    <property type="term" value="F:metal ion binding"/>
    <property type="evidence" value="ECO:0007669"/>
    <property type="project" value="UniProtKB-KW"/>
</dbReference>
<dbReference type="GO" id="GO:0019843">
    <property type="term" value="F:rRNA binding"/>
    <property type="evidence" value="ECO:0007669"/>
    <property type="project" value="UniProtKB-KW"/>
</dbReference>
<dbReference type="GO" id="GO:0042274">
    <property type="term" value="P:ribosomal small subunit biogenesis"/>
    <property type="evidence" value="ECO:0007669"/>
    <property type="project" value="UniProtKB-UniRule"/>
</dbReference>
<dbReference type="CDD" id="cd04466">
    <property type="entry name" value="S1_YloQ_GTPase"/>
    <property type="match status" value="1"/>
</dbReference>
<dbReference type="CDD" id="cd01854">
    <property type="entry name" value="YjeQ_EngC"/>
    <property type="match status" value="1"/>
</dbReference>
<dbReference type="Gene3D" id="2.40.50.140">
    <property type="entry name" value="Nucleic acid-binding proteins"/>
    <property type="match status" value="1"/>
</dbReference>
<dbReference type="Gene3D" id="3.40.50.300">
    <property type="entry name" value="P-loop containing nucleotide triphosphate hydrolases"/>
    <property type="match status" value="1"/>
</dbReference>
<dbReference type="Gene3D" id="1.10.40.50">
    <property type="entry name" value="Probable gtpase engc, domain 3"/>
    <property type="match status" value="1"/>
</dbReference>
<dbReference type="HAMAP" id="MF_01820">
    <property type="entry name" value="GTPase_RsgA"/>
    <property type="match status" value="1"/>
</dbReference>
<dbReference type="InterPro" id="IPR030378">
    <property type="entry name" value="G_CP_dom"/>
</dbReference>
<dbReference type="InterPro" id="IPR012340">
    <property type="entry name" value="NA-bd_OB-fold"/>
</dbReference>
<dbReference type="InterPro" id="IPR027417">
    <property type="entry name" value="P-loop_NTPase"/>
</dbReference>
<dbReference type="InterPro" id="IPR004881">
    <property type="entry name" value="Ribosome_biogen_GTPase_RsgA"/>
</dbReference>
<dbReference type="InterPro" id="IPR010914">
    <property type="entry name" value="RsgA_GTPase_dom"/>
</dbReference>
<dbReference type="InterPro" id="IPR031944">
    <property type="entry name" value="RsgA_N"/>
</dbReference>
<dbReference type="NCBIfam" id="TIGR00157">
    <property type="entry name" value="ribosome small subunit-dependent GTPase A"/>
    <property type="match status" value="1"/>
</dbReference>
<dbReference type="PANTHER" id="PTHR32120">
    <property type="entry name" value="SMALL RIBOSOMAL SUBUNIT BIOGENESIS GTPASE RSGA"/>
    <property type="match status" value="1"/>
</dbReference>
<dbReference type="PANTHER" id="PTHR32120:SF11">
    <property type="entry name" value="SMALL RIBOSOMAL SUBUNIT BIOGENESIS GTPASE RSGA 1, MITOCHONDRIAL-RELATED"/>
    <property type="match status" value="1"/>
</dbReference>
<dbReference type="Pfam" id="PF03193">
    <property type="entry name" value="RsgA_GTPase"/>
    <property type="match status" value="1"/>
</dbReference>
<dbReference type="Pfam" id="PF16745">
    <property type="entry name" value="RsgA_N"/>
    <property type="match status" value="1"/>
</dbReference>
<dbReference type="SUPFAM" id="SSF50249">
    <property type="entry name" value="Nucleic acid-binding proteins"/>
    <property type="match status" value="1"/>
</dbReference>
<dbReference type="SUPFAM" id="SSF52540">
    <property type="entry name" value="P-loop containing nucleoside triphosphate hydrolases"/>
    <property type="match status" value="1"/>
</dbReference>
<dbReference type="PROSITE" id="PS50936">
    <property type="entry name" value="ENGC_GTPASE"/>
    <property type="match status" value="1"/>
</dbReference>
<dbReference type="PROSITE" id="PS51721">
    <property type="entry name" value="G_CP"/>
    <property type="match status" value="1"/>
</dbReference>
<protein>
    <recommendedName>
        <fullName evidence="1">Small ribosomal subunit biogenesis GTPase RsgA</fullName>
        <ecNumber evidence="1">3.6.1.-</ecNumber>
    </recommendedName>
</protein>